<sequence>MNILAPVRRDRVLAELPQCLRKEAALHVRKDFHPRVTCACQEHRTGTVGFKISKVIVVGDLSVGKTCLINRFCKDTFDKNYKATIGVDFEMERFEVLGVPFSLQLWDTAGQERFKCIASTYYRGAQAIIIVFNLNDVASLEHTKQWLADALKENDPSSVLLFLVGSKKDLSTPAQYVLMEKDALKVAHEMKAEYWAVSSLTGENVREFFFRVAALTFEANVLAELEKSGSRRIGDVVRLNSDDSNLYLTASKKKPACCP</sequence>
<comment type="function">
    <text evidence="1 2 3">The small GTPases Rab are key regulators of intracellular membrane trafficking, from the formation of transport vesicles to their fusion with membranes (By similarity). Rabs cycle between an inactive GDP-bound form and an active GTP-bound form that is able to recruit to membranes different sets of downstream effectors directly responsible for vesicle formation, movement, tethering and fusion (By similarity). RAB34 transports protein involved in the redistribution of lysosomes to the peri-Golgi region (By similarity). Plays a role in the maturation of phagosomes that engulf pathogens, such as S.aureus and M.tuberculosis (By similarity). Plays a role in the fusion of phagosomes with lysosomes (By similarity). Required for the early steps of intracellular ciliogenesis, the cilium assembly pathway initiated by trafficking and docking of ciliary vesicles to the centrioles in the cytoplasm, followed by axoneme formation in the cytoplasm. After axoneme elongation, the centrioles migrate close to the cell surface so that ciliary vesicles can fuse with the plasma membrane to expose cilia to the extracellular space. It seems dispensable for ciliogenesis via the extracellular pathway where cilium assembly begins after migration and docking of the centriole to the plasma membrane. Also acts as a positive regulator of hedgehog signaling and regulates ciliary function (By similarity).</text>
</comment>
<comment type="catalytic activity">
    <reaction evidence="1">
        <text>GTP + H2O = GDP + phosphate + H(+)</text>
        <dbReference type="Rhea" id="RHEA:19669"/>
        <dbReference type="ChEBI" id="CHEBI:15377"/>
        <dbReference type="ChEBI" id="CHEBI:15378"/>
        <dbReference type="ChEBI" id="CHEBI:37565"/>
        <dbReference type="ChEBI" id="CHEBI:43474"/>
        <dbReference type="ChEBI" id="CHEBI:58189"/>
        <dbReference type="EC" id="3.6.5.2"/>
    </reaction>
    <physiologicalReaction direction="left-to-right" evidence="1">
        <dbReference type="Rhea" id="RHEA:19670"/>
    </physiologicalReaction>
</comment>
<comment type="cofactor">
    <cofactor evidence="1">
        <name>Mg(2+)</name>
        <dbReference type="ChEBI" id="CHEBI:18420"/>
    </cofactor>
</comment>
<comment type="activity regulation">
    <text evidence="5">Regulated by guanine nucleotide exchange factors (GEFs) which promote the exchange of bound GDP for free GTP. Regulated by GTPase activating proteins (GAPs) which increase the GTP hydrolysis activity. Inhibited by GDP dissociation inhibitors (GDIs).</text>
</comment>
<comment type="subunit">
    <text evidence="3">Interacts with RILP. The GTP-bound form interacts with REP15 (By similarity).</text>
</comment>
<comment type="subcellular location">
    <subcellularLocation>
        <location evidence="2">Cytoplasm</location>
    </subcellularLocation>
    <subcellularLocation>
        <location evidence="2">Golgi apparatus</location>
    </subcellularLocation>
    <subcellularLocation>
        <location evidence="3">Cytoplasmic vesicle</location>
        <location evidence="3">Phagosome</location>
    </subcellularLocation>
    <subcellularLocation>
        <location evidence="3">Cytoplasmic vesicle</location>
        <location evidence="3">Phagosome membrane</location>
        <topology evidence="3">Lipid-anchor</topology>
        <orientation evidence="3">Cytoplasmic side</orientation>
    </subcellularLocation>
    <subcellularLocation>
        <location evidence="2">Cell projection</location>
        <location evidence="2">Cilium</location>
    </subcellularLocation>
    <subcellularLocation>
        <location evidence="3">Cytoplasm</location>
        <location evidence="3">Cytoskeleton</location>
        <location evidence="3">Microtubule organizing center</location>
        <location evidence="3">Centrosome</location>
        <location evidence="3">Centriole</location>
    </subcellularLocation>
    <subcellularLocation>
        <location evidence="2">Cytoplasm</location>
        <location evidence="2">Cytoskeleton</location>
        <location evidence="2">Microtubule organizing center</location>
        <location evidence="2">Centrosome</location>
    </subcellularLocation>
    <text evidence="3">Recruited to phagosomes containing S.aureus or Mycobacterium.</text>
</comment>
<comment type="domain">
    <text evidence="1">Switch 1, switch 2 and the interswitch regions are characteristic of Rab GTPases and mediate the interactions with Rab downstream effectors. The switch regions undergo conformational changes upon nucleotide binding which drives interaction with specific sets of effector proteins, with most effectors only binding to GTP-bound Rab.</text>
</comment>
<comment type="similarity">
    <text evidence="5">Belongs to the small GTPase superfamily. Rab family.</text>
</comment>
<gene>
    <name type="primary">RAB34</name>
</gene>
<dbReference type="EC" id="3.6.5.2" evidence="1"/>
<dbReference type="EMBL" id="DQ917631">
    <property type="protein sequence ID" value="ABI97176.1"/>
    <property type="molecule type" value="mRNA"/>
</dbReference>
<dbReference type="RefSeq" id="NP_001116650.1">
    <property type="nucleotide sequence ID" value="NM_001123178.1"/>
</dbReference>
<dbReference type="RefSeq" id="XP_013845420.1">
    <property type="nucleotide sequence ID" value="XM_013989966.2"/>
</dbReference>
<dbReference type="RefSeq" id="XP_013845421.1">
    <property type="nucleotide sequence ID" value="XM_013989967.2"/>
</dbReference>
<dbReference type="SMR" id="Q06AU4"/>
<dbReference type="FunCoup" id="Q06AU4">
    <property type="interactions" value="248"/>
</dbReference>
<dbReference type="STRING" id="9823.ENSSSCP00000059836"/>
<dbReference type="PaxDb" id="9823-ENSSSCP00000018828"/>
<dbReference type="PeptideAtlas" id="Q06AU4"/>
<dbReference type="Ensembl" id="ENSSSCT00000019341.5">
    <property type="protein sequence ID" value="ENSSSCP00000018828.2"/>
    <property type="gene ID" value="ENSSSCG00000017769.5"/>
</dbReference>
<dbReference type="Ensembl" id="ENSSSCT00015097793.1">
    <property type="protein sequence ID" value="ENSSSCP00015040197.1"/>
    <property type="gene ID" value="ENSSSCG00015071811.1"/>
</dbReference>
<dbReference type="Ensembl" id="ENSSSCT00025071654.1">
    <property type="protein sequence ID" value="ENSSSCP00025031038.1"/>
    <property type="gene ID" value="ENSSSCG00025052298.1"/>
</dbReference>
<dbReference type="Ensembl" id="ENSSSCT00030082377.1">
    <property type="protein sequence ID" value="ENSSSCP00030037829.1"/>
    <property type="gene ID" value="ENSSSCG00030058966.1"/>
</dbReference>
<dbReference type="Ensembl" id="ENSSSCT00035081506.1">
    <property type="protein sequence ID" value="ENSSSCP00035033728.1"/>
    <property type="gene ID" value="ENSSSCG00035060685.1"/>
</dbReference>
<dbReference type="Ensembl" id="ENSSSCT00040060798.1">
    <property type="protein sequence ID" value="ENSSSCP00040025537.1"/>
    <property type="gene ID" value="ENSSSCG00040045190.1"/>
</dbReference>
<dbReference type="Ensembl" id="ENSSSCT00045052430.1">
    <property type="protein sequence ID" value="ENSSSCP00045036460.1"/>
    <property type="gene ID" value="ENSSSCG00045030278.1"/>
</dbReference>
<dbReference type="Ensembl" id="ENSSSCT00045052549.1">
    <property type="protein sequence ID" value="ENSSSCP00045036541.1"/>
    <property type="gene ID" value="ENSSSCG00045030278.1"/>
</dbReference>
<dbReference type="Ensembl" id="ENSSSCT00055004350.1">
    <property type="protein sequence ID" value="ENSSSCP00055003336.1"/>
    <property type="gene ID" value="ENSSSCG00055002223.1"/>
</dbReference>
<dbReference type="Ensembl" id="ENSSSCT00055004362.1">
    <property type="protein sequence ID" value="ENSSSCP00055003347.1"/>
    <property type="gene ID" value="ENSSSCG00055002223.1"/>
</dbReference>
<dbReference type="Ensembl" id="ENSSSCT00060091661.1">
    <property type="protein sequence ID" value="ENSSSCP00060039618.1"/>
    <property type="gene ID" value="ENSSSCG00060067189.1"/>
</dbReference>
<dbReference type="Ensembl" id="ENSSSCT00060091980.1">
    <property type="protein sequence ID" value="ENSSSCP00060039741.1"/>
    <property type="gene ID" value="ENSSSCG00060067189.1"/>
</dbReference>
<dbReference type="Ensembl" id="ENSSSCT00065066239.1">
    <property type="protein sequence ID" value="ENSSSCP00065028705.1"/>
    <property type="gene ID" value="ENSSSCG00065048406.1"/>
</dbReference>
<dbReference type="Ensembl" id="ENSSSCT00065066468.1">
    <property type="protein sequence ID" value="ENSSSCP00065028803.1"/>
    <property type="gene ID" value="ENSSSCG00065048406.1"/>
</dbReference>
<dbReference type="Ensembl" id="ENSSSCT00070022775.1">
    <property type="protein sequence ID" value="ENSSSCP00070018835.1"/>
    <property type="gene ID" value="ENSSSCG00070011675.1"/>
</dbReference>
<dbReference type="Ensembl" id="ENSSSCT00085035933">
    <property type="protein sequence ID" value="ENSSSCP00085024671"/>
    <property type="gene ID" value="ENSSSCG00085018957"/>
</dbReference>
<dbReference type="Ensembl" id="ENSSSCT00090022327">
    <property type="protein sequence ID" value="ENSSSCP00090013732"/>
    <property type="gene ID" value="ENSSSCG00090012698"/>
</dbReference>
<dbReference type="Ensembl" id="ENSSSCT00105010660">
    <property type="protein sequence ID" value="ENSSSCP00105007861"/>
    <property type="gene ID" value="ENSSSCG00105005260"/>
</dbReference>
<dbReference type="Ensembl" id="ENSSSCT00110056614">
    <property type="protein sequence ID" value="ENSSSCP00110039325"/>
    <property type="gene ID" value="ENSSSCG00110029622"/>
</dbReference>
<dbReference type="Ensembl" id="ENSSSCT00115012301">
    <property type="protein sequence ID" value="ENSSSCP00115011614"/>
    <property type="gene ID" value="ENSSSCG00115007032"/>
</dbReference>
<dbReference type="Ensembl" id="ENSSSCT00130072615">
    <property type="protein sequence ID" value="ENSSSCP00130052323"/>
    <property type="gene ID" value="ENSSSCG00130037211"/>
</dbReference>
<dbReference type="GeneID" id="100144491"/>
<dbReference type="KEGG" id="ssc:100144491"/>
<dbReference type="CTD" id="83871"/>
<dbReference type="VGNC" id="VGNC:98258">
    <property type="gene designation" value="RAB34"/>
</dbReference>
<dbReference type="eggNOG" id="KOG0094">
    <property type="taxonomic scope" value="Eukaryota"/>
</dbReference>
<dbReference type="GeneTree" id="ENSGT00940000159645"/>
<dbReference type="HOGENOM" id="CLU_041217_22_0_1"/>
<dbReference type="InParanoid" id="Q06AU4"/>
<dbReference type="OMA" id="DRMITKF"/>
<dbReference type="OrthoDB" id="413584at2759"/>
<dbReference type="TreeFam" id="TF326626"/>
<dbReference type="Proteomes" id="UP000008227">
    <property type="component" value="Chromosome 12"/>
</dbReference>
<dbReference type="Proteomes" id="UP000314985">
    <property type="component" value="Chromosome 12"/>
</dbReference>
<dbReference type="Proteomes" id="UP000694570">
    <property type="component" value="Unplaced"/>
</dbReference>
<dbReference type="Proteomes" id="UP000694571">
    <property type="component" value="Unplaced"/>
</dbReference>
<dbReference type="Proteomes" id="UP000694720">
    <property type="component" value="Unplaced"/>
</dbReference>
<dbReference type="Proteomes" id="UP000694722">
    <property type="component" value="Unplaced"/>
</dbReference>
<dbReference type="Proteomes" id="UP000694723">
    <property type="component" value="Unplaced"/>
</dbReference>
<dbReference type="Proteomes" id="UP000694724">
    <property type="component" value="Unplaced"/>
</dbReference>
<dbReference type="Proteomes" id="UP000694725">
    <property type="component" value="Unplaced"/>
</dbReference>
<dbReference type="Proteomes" id="UP000694726">
    <property type="component" value="Unplaced"/>
</dbReference>
<dbReference type="Proteomes" id="UP000694727">
    <property type="component" value="Unplaced"/>
</dbReference>
<dbReference type="Proteomes" id="UP000694728">
    <property type="component" value="Unplaced"/>
</dbReference>
<dbReference type="Bgee" id="ENSSSCG00000017769">
    <property type="expression patterns" value="Expressed in forelimb bud and 37 other cell types or tissues"/>
</dbReference>
<dbReference type="ExpressionAtlas" id="Q06AU4">
    <property type="expression patterns" value="baseline and differential"/>
</dbReference>
<dbReference type="GO" id="GO:0005814">
    <property type="term" value="C:centriole"/>
    <property type="evidence" value="ECO:0000250"/>
    <property type="project" value="UniProtKB"/>
</dbReference>
<dbReference type="GO" id="GO:0005813">
    <property type="term" value="C:centrosome"/>
    <property type="evidence" value="ECO:0007669"/>
    <property type="project" value="UniProtKB-SubCell"/>
</dbReference>
<dbReference type="GO" id="GO:0005929">
    <property type="term" value="C:cilium"/>
    <property type="evidence" value="ECO:0007669"/>
    <property type="project" value="UniProtKB-SubCell"/>
</dbReference>
<dbReference type="GO" id="GO:0031985">
    <property type="term" value="C:Golgi cisterna"/>
    <property type="evidence" value="ECO:0000318"/>
    <property type="project" value="GO_Central"/>
</dbReference>
<dbReference type="GO" id="GO:0045335">
    <property type="term" value="C:phagocytic vesicle"/>
    <property type="evidence" value="ECO:0000250"/>
    <property type="project" value="UniProtKB"/>
</dbReference>
<dbReference type="GO" id="GO:0030670">
    <property type="term" value="C:phagocytic vesicle membrane"/>
    <property type="evidence" value="ECO:0007669"/>
    <property type="project" value="UniProtKB-SubCell"/>
</dbReference>
<dbReference type="GO" id="GO:0005525">
    <property type="term" value="F:GTP binding"/>
    <property type="evidence" value="ECO:0000318"/>
    <property type="project" value="GO_Central"/>
</dbReference>
<dbReference type="GO" id="GO:0003924">
    <property type="term" value="F:GTPase activity"/>
    <property type="evidence" value="ECO:0000318"/>
    <property type="project" value="GO_Central"/>
</dbReference>
<dbReference type="GO" id="GO:0060271">
    <property type="term" value="P:cilium assembly"/>
    <property type="evidence" value="ECO:0000250"/>
    <property type="project" value="UniProtKB"/>
</dbReference>
<dbReference type="GO" id="GO:0061824">
    <property type="term" value="P:cytosolic ciliogenesis"/>
    <property type="evidence" value="ECO:0000250"/>
    <property type="project" value="UniProtKB"/>
</dbReference>
<dbReference type="GO" id="GO:0043001">
    <property type="term" value="P:Golgi to plasma membrane protein transport"/>
    <property type="evidence" value="ECO:0000318"/>
    <property type="project" value="GO_Central"/>
</dbReference>
<dbReference type="GO" id="GO:0090382">
    <property type="term" value="P:phagosome maturation"/>
    <property type="evidence" value="ECO:0000250"/>
    <property type="project" value="UniProtKB"/>
</dbReference>
<dbReference type="GO" id="GO:0090385">
    <property type="term" value="P:phagosome-lysosome fusion"/>
    <property type="evidence" value="ECO:0000250"/>
    <property type="project" value="UniProtKB"/>
</dbReference>
<dbReference type="GO" id="GO:0045880">
    <property type="term" value="P:positive regulation of smoothened signaling pathway"/>
    <property type="evidence" value="ECO:0000250"/>
    <property type="project" value="UniProtKB"/>
</dbReference>
<dbReference type="CDD" id="cd04108">
    <property type="entry name" value="Rab36_Rab34"/>
    <property type="match status" value="1"/>
</dbReference>
<dbReference type="FunFam" id="3.40.50.300:FF:000748">
    <property type="entry name" value="ras-related protein Rab-34 isoform X2"/>
    <property type="match status" value="1"/>
</dbReference>
<dbReference type="Gene3D" id="3.40.50.300">
    <property type="entry name" value="P-loop containing nucleotide triphosphate hydrolases"/>
    <property type="match status" value="1"/>
</dbReference>
<dbReference type="InterPro" id="IPR027417">
    <property type="entry name" value="P-loop_NTPase"/>
</dbReference>
<dbReference type="InterPro" id="IPR050227">
    <property type="entry name" value="Rab"/>
</dbReference>
<dbReference type="InterPro" id="IPR005225">
    <property type="entry name" value="Small_GTP-bd"/>
</dbReference>
<dbReference type="InterPro" id="IPR001806">
    <property type="entry name" value="Small_GTPase"/>
</dbReference>
<dbReference type="NCBIfam" id="TIGR00231">
    <property type="entry name" value="small_GTP"/>
    <property type="match status" value="1"/>
</dbReference>
<dbReference type="PANTHER" id="PTHR47977">
    <property type="entry name" value="RAS-RELATED PROTEIN RAB"/>
    <property type="match status" value="1"/>
</dbReference>
<dbReference type="Pfam" id="PF00071">
    <property type="entry name" value="Ras"/>
    <property type="match status" value="1"/>
</dbReference>
<dbReference type="PRINTS" id="PR00449">
    <property type="entry name" value="RASTRNSFRMNG"/>
</dbReference>
<dbReference type="SMART" id="SM00175">
    <property type="entry name" value="RAB"/>
    <property type="match status" value="1"/>
</dbReference>
<dbReference type="SMART" id="SM00176">
    <property type="entry name" value="RAN"/>
    <property type="match status" value="1"/>
</dbReference>
<dbReference type="SMART" id="SM00173">
    <property type="entry name" value="RAS"/>
    <property type="match status" value="1"/>
</dbReference>
<dbReference type="SMART" id="SM00174">
    <property type="entry name" value="RHO"/>
    <property type="match status" value="1"/>
</dbReference>
<dbReference type="SUPFAM" id="SSF52540">
    <property type="entry name" value="P-loop containing nucleoside triphosphate hydrolases"/>
    <property type="match status" value="1"/>
</dbReference>
<dbReference type="PROSITE" id="PS51419">
    <property type="entry name" value="RAB"/>
    <property type="match status" value="1"/>
</dbReference>
<proteinExistence type="evidence at transcript level"/>
<organism>
    <name type="scientific">Sus scrofa</name>
    <name type="common">Pig</name>
    <dbReference type="NCBI Taxonomy" id="9823"/>
    <lineage>
        <taxon>Eukaryota</taxon>
        <taxon>Metazoa</taxon>
        <taxon>Chordata</taxon>
        <taxon>Craniata</taxon>
        <taxon>Vertebrata</taxon>
        <taxon>Euteleostomi</taxon>
        <taxon>Mammalia</taxon>
        <taxon>Eutheria</taxon>
        <taxon>Laurasiatheria</taxon>
        <taxon>Artiodactyla</taxon>
        <taxon>Suina</taxon>
        <taxon>Suidae</taxon>
        <taxon>Sus</taxon>
    </lineage>
</organism>
<protein>
    <recommendedName>
        <fullName>Ras-related protein Rab-34</fullName>
        <ecNumber evidence="1">3.6.5.2</ecNumber>
    </recommendedName>
</protein>
<evidence type="ECO:0000250" key="1">
    <source>
        <dbReference type="UniProtKB" id="P20340"/>
    </source>
</evidence>
<evidence type="ECO:0000250" key="2">
    <source>
        <dbReference type="UniProtKB" id="Q64008"/>
    </source>
</evidence>
<evidence type="ECO:0000250" key="3">
    <source>
        <dbReference type="UniProtKB" id="Q9BZG1"/>
    </source>
</evidence>
<evidence type="ECO:0000255" key="4"/>
<evidence type="ECO:0000305" key="5"/>
<keyword id="KW-0007">Acetylation</keyword>
<keyword id="KW-0966">Cell projection</keyword>
<keyword id="KW-0970">Cilium biogenesis/degradation</keyword>
<keyword id="KW-0963">Cytoplasm</keyword>
<keyword id="KW-0968">Cytoplasmic vesicle</keyword>
<keyword id="KW-0206">Cytoskeleton</keyword>
<keyword id="KW-0333">Golgi apparatus</keyword>
<keyword id="KW-0342">GTP-binding</keyword>
<keyword id="KW-0378">Hydrolase</keyword>
<keyword id="KW-0449">Lipoprotein</keyword>
<keyword id="KW-0460">Magnesium</keyword>
<keyword id="KW-0472">Membrane</keyword>
<keyword id="KW-0479">Metal-binding</keyword>
<keyword id="KW-0547">Nucleotide-binding</keyword>
<keyword id="KW-0597">Phosphoprotein</keyword>
<keyword id="KW-0636">Prenylation</keyword>
<keyword id="KW-0653">Protein transport</keyword>
<keyword id="KW-1185">Reference proteome</keyword>
<keyword id="KW-0813">Transport</keyword>
<name>RAB34_PIG</name>
<reference key="1">
    <citation type="submission" date="2006-08" db="EMBL/GenBank/DDBJ databases">
        <authorList>
            <person name="Liu G.Y."/>
        </authorList>
    </citation>
    <scope>NUCLEOTIDE SEQUENCE [LARGE SCALE MRNA]</scope>
</reference>
<accession>Q06AU4</accession>
<feature type="chain" id="PRO_0000262880" description="Ras-related protein Rab-34">
    <location>
        <begin position="1"/>
        <end position="259"/>
    </location>
</feature>
<feature type="short sequence motif" description="Switch 1" evidence="1">
    <location>
        <begin position="71"/>
        <end position="89"/>
    </location>
</feature>
<feature type="short sequence motif" description="Switch 2" evidence="1">
    <location>
        <begin position="108"/>
        <end position="127"/>
    </location>
</feature>
<feature type="binding site" evidence="1">
    <location>
        <position position="62"/>
    </location>
    <ligand>
        <name>GTP</name>
        <dbReference type="ChEBI" id="CHEBI:37565"/>
    </ligand>
</feature>
<feature type="binding site" evidence="1">
    <location>
        <position position="63"/>
    </location>
    <ligand>
        <name>GTP</name>
        <dbReference type="ChEBI" id="CHEBI:37565"/>
    </ligand>
</feature>
<feature type="binding site" evidence="1">
    <location>
        <position position="64"/>
    </location>
    <ligand>
        <name>GTP</name>
        <dbReference type="ChEBI" id="CHEBI:37565"/>
    </ligand>
</feature>
<feature type="binding site" evidence="1">
    <location>
        <position position="65"/>
    </location>
    <ligand>
        <name>GTP</name>
        <dbReference type="ChEBI" id="CHEBI:37565"/>
    </ligand>
</feature>
<feature type="binding site" evidence="1">
    <location>
        <position position="66"/>
    </location>
    <ligand>
        <name>GTP</name>
        <dbReference type="ChEBI" id="CHEBI:37565"/>
    </ligand>
</feature>
<feature type="binding site" evidence="1">
    <location>
        <position position="66"/>
    </location>
    <ligand>
        <name>Mg(2+)</name>
        <dbReference type="ChEBI" id="CHEBI:18420"/>
    </ligand>
</feature>
<feature type="binding site" evidence="1">
    <location>
        <position position="78"/>
    </location>
    <ligand>
        <name>GTP</name>
        <dbReference type="ChEBI" id="CHEBI:37565"/>
    </ligand>
</feature>
<feature type="binding site" evidence="1">
    <location>
        <position position="81"/>
    </location>
    <ligand>
        <name>GTP</name>
        <dbReference type="ChEBI" id="CHEBI:37565"/>
    </ligand>
</feature>
<feature type="binding site" evidence="1">
    <location>
        <position position="84"/>
    </location>
    <ligand>
        <name>GTP</name>
        <dbReference type="ChEBI" id="CHEBI:37565"/>
    </ligand>
</feature>
<feature type="binding site" evidence="1">
    <location>
        <position position="84"/>
    </location>
    <ligand>
        <name>Mg(2+)</name>
        <dbReference type="ChEBI" id="CHEBI:18420"/>
    </ligand>
</feature>
<feature type="binding site" evidence="1">
    <location>
        <position position="107"/>
    </location>
    <ligand>
        <name>Mg(2+)</name>
        <dbReference type="ChEBI" id="CHEBI:18420"/>
    </ligand>
</feature>
<feature type="binding site" evidence="1">
    <location>
        <position position="110"/>
    </location>
    <ligand>
        <name>GTP</name>
        <dbReference type="ChEBI" id="CHEBI:37565"/>
    </ligand>
</feature>
<feature type="binding site" evidence="1">
    <location>
        <position position="167"/>
    </location>
    <ligand>
        <name>GTP</name>
        <dbReference type="ChEBI" id="CHEBI:37565"/>
    </ligand>
</feature>
<feature type="binding site" evidence="1">
    <location>
        <position position="169"/>
    </location>
    <ligand>
        <name>GTP</name>
        <dbReference type="ChEBI" id="CHEBI:37565"/>
    </ligand>
</feature>
<feature type="binding site" evidence="1">
    <location>
        <position position="198"/>
    </location>
    <ligand>
        <name>GTP</name>
        <dbReference type="ChEBI" id="CHEBI:37565"/>
    </ligand>
</feature>
<feature type="modified residue" description="N-acetylmethionine" evidence="3">
    <location>
        <position position="1"/>
    </location>
</feature>
<feature type="modified residue" description="Phosphoserine" evidence="3">
    <location>
        <position position="241"/>
    </location>
</feature>
<feature type="modified residue" description="Phosphoserine" evidence="3">
    <location>
        <position position="244"/>
    </location>
</feature>
<feature type="lipid moiety-binding region" description="S-geranylgeranyl cysteine" evidence="4">
    <location>
        <position position="257"/>
    </location>
</feature>
<feature type="lipid moiety-binding region" description="S-geranylgeranyl cysteine" evidence="4">
    <location>
        <position position="258"/>
    </location>
</feature>